<gene>
    <name type="primary">fur</name>
</gene>
<protein>
    <recommendedName>
        <fullName>Ferric uptake regulation protein</fullName>
        <shortName>Ferric uptake regulator</shortName>
    </recommendedName>
</protein>
<accession>P0A0S9</accession>
<accession>Q57298</accession>
<proteinExistence type="inferred from homology"/>
<organism>
    <name type="scientific">Neisseria meningitidis serogroup C</name>
    <dbReference type="NCBI Taxonomy" id="135720"/>
    <lineage>
        <taxon>Bacteria</taxon>
        <taxon>Pseudomonadati</taxon>
        <taxon>Pseudomonadota</taxon>
        <taxon>Betaproteobacteria</taxon>
        <taxon>Neisseriales</taxon>
        <taxon>Neisseriaceae</taxon>
        <taxon>Neisseria</taxon>
    </lineage>
</organism>
<evidence type="ECO:0000250" key="1"/>
<evidence type="ECO:0000305" key="2"/>
<comment type="function">
    <text>Acts as a global negative controlling element, employing Fe(2+) as a cofactor to bind the operator of the repressed genes. Regulates the expression of the fbp protein.</text>
</comment>
<comment type="subunit">
    <text evidence="1">Homodimer.</text>
</comment>
<comment type="subcellular location">
    <subcellularLocation>
        <location evidence="1">Cytoplasm</location>
    </subcellularLocation>
</comment>
<comment type="similarity">
    <text evidence="2">Belongs to the Fur family.</text>
</comment>
<reference key="1">
    <citation type="journal article" date="1994" name="Mol. Microbiol.">
        <title>Identification and cloning of a fur homologue from Neisseria meningitidis.</title>
        <authorList>
            <person name="Thomas C.E."/>
            <person name="Sparling P.F."/>
        </authorList>
    </citation>
    <scope>NUCLEOTIDE SEQUENCE [GENOMIC DNA]</scope>
    <source>
        <strain>FAM20 / Serogroup C</strain>
    </source>
</reference>
<dbReference type="EMBL" id="L19777">
    <property type="protein sequence ID" value="AAA21816.1"/>
    <property type="molecule type" value="Genomic_DNA"/>
</dbReference>
<dbReference type="PIR" id="S54164">
    <property type="entry name" value="S54164"/>
</dbReference>
<dbReference type="SMR" id="P0A0S9"/>
<dbReference type="GeneID" id="86877157"/>
<dbReference type="GO" id="GO:0005829">
    <property type="term" value="C:cytosol"/>
    <property type="evidence" value="ECO:0007669"/>
    <property type="project" value="TreeGrafter"/>
</dbReference>
<dbReference type="GO" id="GO:0003700">
    <property type="term" value="F:DNA-binding transcription factor activity"/>
    <property type="evidence" value="ECO:0007669"/>
    <property type="project" value="InterPro"/>
</dbReference>
<dbReference type="GO" id="GO:0000976">
    <property type="term" value="F:transcription cis-regulatory region binding"/>
    <property type="evidence" value="ECO:0007669"/>
    <property type="project" value="TreeGrafter"/>
</dbReference>
<dbReference type="GO" id="GO:0008270">
    <property type="term" value="F:zinc ion binding"/>
    <property type="evidence" value="ECO:0007669"/>
    <property type="project" value="TreeGrafter"/>
</dbReference>
<dbReference type="GO" id="GO:0045892">
    <property type="term" value="P:negative regulation of DNA-templated transcription"/>
    <property type="evidence" value="ECO:0007669"/>
    <property type="project" value="TreeGrafter"/>
</dbReference>
<dbReference type="GO" id="GO:1900705">
    <property type="term" value="P:negative regulation of siderophore biosynthetic process"/>
    <property type="evidence" value="ECO:0007669"/>
    <property type="project" value="TreeGrafter"/>
</dbReference>
<dbReference type="CDD" id="cd07153">
    <property type="entry name" value="Fur_like"/>
    <property type="match status" value="1"/>
</dbReference>
<dbReference type="FunFam" id="1.10.10.10:FF:000007">
    <property type="entry name" value="Ferric uptake regulation protein"/>
    <property type="match status" value="1"/>
</dbReference>
<dbReference type="FunFam" id="3.30.1490.190:FF:000001">
    <property type="entry name" value="Ferric uptake regulation protein"/>
    <property type="match status" value="1"/>
</dbReference>
<dbReference type="Gene3D" id="3.30.1490.190">
    <property type="match status" value="1"/>
</dbReference>
<dbReference type="Gene3D" id="1.10.10.10">
    <property type="entry name" value="Winged helix-like DNA-binding domain superfamily/Winged helix DNA-binding domain"/>
    <property type="match status" value="1"/>
</dbReference>
<dbReference type="InterPro" id="IPR002481">
    <property type="entry name" value="FUR"/>
</dbReference>
<dbReference type="InterPro" id="IPR043135">
    <property type="entry name" value="Fur_C"/>
</dbReference>
<dbReference type="InterPro" id="IPR036388">
    <property type="entry name" value="WH-like_DNA-bd_sf"/>
</dbReference>
<dbReference type="InterPro" id="IPR036390">
    <property type="entry name" value="WH_DNA-bd_sf"/>
</dbReference>
<dbReference type="NCBIfam" id="NF006999">
    <property type="entry name" value="PRK09462.1"/>
    <property type="match status" value="1"/>
</dbReference>
<dbReference type="PANTHER" id="PTHR33202:SF2">
    <property type="entry name" value="FERRIC UPTAKE REGULATION PROTEIN"/>
    <property type="match status" value="1"/>
</dbReference>
<dbReference type="PANTHER" id="PTHR33202">
    <property type="entry name" value="ZINC UPTAKE REGULATION PROTEIN"/>
    <property type="match status" value="1"/>
</dbReference>
<dbReference type="Pfam" id="PF01475">
    <property type="entry name" value="FUR"/>
    <property type="match status" value="1"/>
</dbReference>
<dbReference type="SUPFAM" id="SSF46785">
    <property type="entry name" value="Winged helix' DNA-binding domain"/>
    <property type="match status" value="1"/>
</dbReference>
<keyword id="KW-0963">Cytoplasm</keyword>
<keyword id="KW-0238">DNA-binding</keyword>
<keyword id="KW-0408">Iron</keyword>
<keyword id="KW-0479">Metal-binding</keyword>
<keyword id="KW-0678">Repressor</keyword>
<keyword id="KW-0804">Transcription</keyword>
<keyword id="KW-0805">Transcription regulation</keyword>
<keyword id="KW-0862">Zinc</keyword>
<feature type="chain" id="PRO_0000095566" description="Ferric uptake regulation protein">
    <location>
        <begin position="1"/>
        <end position="144"/>
    </location>
</feature>
<feature type="region of interest" description="DNA-binding" evidence="1">
    <location>
        <begin position="1"/>
        <end position="86"/>
    </location>
</feature>
<feature type="region of interest" description="Dimerization" evidence="1">
    <location>
        <begin position="87"/>
        <end position="144"/>
    </location>
</feature>
<feature type="binding site" evidence="1">
    <location>
        <position position="35"/>
    </location>
    <ligand>
        <name>Zn(2+)</name>
        <dbReference type="ChEBI" id="CHEBI:29105"/>
    </ligand>
</feature>
<feature type="binding site" evidence="1">
    <location>
        <position position="83"/>
    </location>
    <ligand>
        <name>Zn(2+)</name>
        <dbReference type="ChEBI" id="CHEBI:29105"/>
    </ligand>
</feature>
<feature type="binding site" evidence="1">
    <location>
        <position position="89"/>
    </location>
    <ligand>
        <name>Fe cation</name>
        <dbReference type="ChEBI" id="CHEBI:24875"/>
    </ligand>
</feature>
<feature type="binding site" evidence="1">
    <location>
        <position position="91"/>
    </location>
    <ligand>
        <name>Fe cation</name>
        <dbReference type="ChEBI" id="CHEBI:24875"/>
    </ligand>
</feature>
<feature type="binding site" evidence="1">
    <location>
        <position position="92"/>
    </location>
    <ligand>
        <name>Zn(2+)</name>
        <dbReference type="ChEBI" id="CHEBI:29105"/>
    </ligand>
</feature>
<feature type="binding site" evidence="1">
    <location>
        <position position="95"/>
    </location>
    <ligand>
        <name>Zn(2+)</name>
        <dbReference type="ChEBI" id="CHEBI:29105"/>
    </ligand>
</feature>
<feature type="binding site" evidence="1">
    <location>
        <position position="98"/>
    </location>
    <ligand>
        <name>Zn(2+)</name>
        <dbReference type="ChEBI" id="CHEBI:29105"/>
    </ligand>
</feature>
<feature type="binding site" evidence="1">
    <location>
        <position position="103"/>
    </location>
    <ligand>
        <name>Zn(2+)</name>
        <dbReference type="ChEBI" id="CHEBI:29105"/>
    </ligand>
</feature>
<feature type="binding site" evidence="1">
    <location>
        <position position="110"/>
    </location>
    <ligand>
        <name>Fe cation</name>
        <dbReference type="ChEBI" id="CHEBI:24875"/>
    </ligand>
</feature>
<feature type="binding site" evidence="1">
    <location>
        <position position="127"/>
    </location>
    <ligand>
        <name>Fe cation</name>
        <dbReference type="ChEBI" id="CHEBI:24875"/>
    </ligand>
</feature>
<sequence>MEKFSNIAQLKDSGLKVTGPRLKILDLFETHAEEHLSAEDVYRILLEEGVEIGVATIYRVLTQFEQAGILQRHHFETGKAVYELDKGDHHDHIVCVKCGEVTEFHNPEIEALQDKIAEENGYRIVDHALYMYGVCSDCQAKGKR</sequence>
<name>FUR_NEIMC</name>